<evidence type="ECO:0000255" key="1">
    <source>
        <dbReference type="HAMAP-Rule" id="MF_00019"/>
    </source>
</evidence>
<name>PLSX_FRAT1</name>
<organism>
    <name type="scientific">Francisella tularensis subsp. tularensis (strain FSC 198)</name>
    <dbReference type="NCBI Taxonomy" id="393115"/>
    <lineage>
        <taxon>Bacteria</taxon>
        <taxon>Pseudomonadati</taxon>
        <taxon>Pseudomonadota</taxon>
        <taxon>Gammaproteobacteria</taxon>
        <taxon>Thiotrichales</taxon>
        <taxon>Francisellaceae</taxon>
        <taxon>Francisella</taxon>
    </lineage>
</organism>
<sequence>MGYKISIDAMGGDHGLNTTIPAALEAVKKDSNLQIVLVGDHHKIKRALDRYSKVKKIKLPVLQRIAIHHASETVGMDESPSIAVRKKKDSSMRVAINLVKDRTVDACVSAGNTGALMATSKFVLKTINGVDRPAIVYALPAFNRETKQLSKTYMLDLGANVVCTSEQLFQFAIMGSILAASSKGIAEPRVSLLNIGEEEMKGLDNIKNAAKLLQGCDFINYNGYIEGKYIFDDTTDVIVCDGFVGNVSLKTMEGSLRLIESLIKKTIQESSLLMKIPIVMALPIFKKMKKGMNLDSFNGASLLGLTGIVVKSHGGASANAFETAIYEAIKEIKYNIPKTIQESLEKVL</sequence>
<accession>Q14GM4</accession>
<proteinExistence type="inferred from homology"/>
<gene>
    <name evidence="1" type="primary">plsX</name>
    <name type="ordered locus">FTF1372</name>
</gene>
<dbReference type="EC" id="2.3.1.274" evidence="1"/>
<dbReference type="EMBL" id="AM286280">
    <property type="protein sequence ID" value="CAL09388.1"/>
    <property type="molecule type" value="Genomic_DNA"/>
</dbReference>
<dbReference type="RefSeq" id="WP_003016130.1">
    <property type="nucleotide sequence ID" value="NC_008245.1"/>
</dbReference>
<dbReference type="SMR" id="Q14GM4"/>
<dbReference type="KEGG" id="ftf:FTF1372"/>
<dbReference type="HOGENOM" id="CLU_039379_1_0_6"/>
<dbReference type="UniPathway" id="UPA00085"/>
<dbReference type="GO" id="GO:0005737">
    <property type="term" value="C:cytoplasm"/>
    <property type="evidence" value="ECO:0007669"/>
    <property type="project" value="UniProtKB-SubCell"/>
</dbReference>
<dbReference type="GO" id="GO:0043811">
    <property type="term" value="F:phosphate:acyl-[acyl carrier protein] acyltransferase activity"/>
    <property type="evidence" value="ECO:0007669"/>
    <property type="project" value="UniProtKB-UniRule"/>
</dbReference>
<dbReference type="GO" id="GO:0006633">
    <property type="term" value="P:fatty acid biosynthetic process"/>
    <property type="evidence" value="ECO:0007669"/>
    <property type="project" value="UniProtKB-UniRule"/>
</dbReference>
<dbReference type="GO" id="GO:0008654">
    <property type="term" value="P:phospholipid biosynthetic process"/>
    <property type="evidence" value="ECO:0007669"/>
    <property type="project" value="UniProtKB-KW"/>
</dbReference>
<dbReference type="Gene3D" id="3.40.718.10">
    <property type="entry name" value="Isopropylmalate Dehydrogenase"/>
    <property type="match status" value="1"/>
</dbReference>
<dbReference type="HAMAP" id="MF_00019">
    <property type="entry name" value="PlsX"/>
    <property type="match status" value="1"/>
</dbReference>
<dbReference type="InterPro" id="IPR003664">
    <property type="entry name" value="FA_synthesis"/>
</dbReference>
<dbReference type="InterPro" id="IPR012281">
    <property type="entry name" value="Phospholipid_synth_PlsX-like"/>
</dbReference>
<dbReference type="NCBIfam" id="TIGR00182">
    <property type="entry name" value="plsX"/>
    <property type="match status" value="1"/>
</dbReference>
<dbReference type="PANTHER" id="PTHR30100">
    <property type="entry name" value="FATTY ACID/PHOSPHOLIPID SYNTHESIS PROTEIN PLSX"/>
    <property type="match status" value="1"/>
</dbReference>
<dbReference type="PANTHER" id="PTHR30100:SF1">
    <property type="entry name" value="PHOSPHATE ACYLTRANSFERASE"/>
    <property type="match status" value="1"/>
</dbReference>
<dbReference type="Pfam" id="PF02504">
    <property type="entry name" value="FA_synthesis"/>
    <property type="match status" value="1"/>
</dbReference>
<dbReference type="PIRSF" id="PIRSF002465">
    <property type="entry name" value="Phsphlp_syn_PlsX"/>
    <property type="match status" value="1"/>
</dbReference>
<dbReference type="SUPFAM" id="SSF53659">
    <property type="entry name" value="Isocitrate/Isopropylmalate dehydrogenase-like"/>
    <property type="match status" value="1"/>
</dbReference>
<comment type="function">
    <text evidence="1">Catalyzes the reversible formation of acyl-phosphate (acyl-PO(4)) from acyl-[acyl-carrier-protein] (acyl-ACP). This enzyme utilizes acyl-ACP as fatty acyl donor, but not acyl-CoA.</text>
</comment>
<comment type="catalytic activity">
    <reaction evidence="1">
        <text>a fatty acyl-[ACP] + phosphate = an acyl phosphate + holo-[ACP]</text>
        <dbReference type="Rhea" id="RHEA:42292"/>
        <dbReference type="Rhea" id="RHEA-COMP:9685"/>
        <dbReference type="Rhea" id="RHEA-COMP:14125"/>
        <dbReference type="ChEBI" id="CHEBI:43474"/>
        <dbReference type="ChEBI" id="CHEBI:59918"/>
        <dbReference type="ChEBI" id="CHEBI:64479"/>
        <dbReference type="ChEBI" id="CHEBI:138651"/>
        <dbReference type="EC" id="2.3.1.274"/>
    </reaction>
</comment>
<comment type="pathway">
    <text evidence="1">Lipid metabolism; phospholipid metabolism.</text>
</comment>
<comment type="subunit">
    <text evidence="1">Homodimer. Probably interacts with PlsY.</text>
</comment>
<comment type="subcellular location">
    <subcellularLocation>
        <location evidence="1">Cytoplasm</location>
    </subcellularLocation>
    <text evidence="1">Associated with the membrane possibly through PlsY.</text>
</comment>
<comment type="similarity">
    <text evidence="1">Belongs to the PlsX family.</text>
</comment>
<protein>
    <recommendedName>
        <fullName evidence="1">Phosphate acyltransferase</fullName>
        <ecNumber evidence="1">2.3.1.274</ecNumber>
    </recommendedName>
    <alternativeName>
        <fullName evidence="1">Acyl-ACP phosphotransacylase</fullName>
    </alternativeName>
    <alternativeName>
        <fullName evidence="1">Acyl-[acyl-carrier-protein]--phosphate acyltransferase</fullName>
    </alternativeName>
    <alternativeName>
        <fullName evidence="1">Phosphate-acyl-ACP acyltransferase</fullName>
    </alternativeName>
</protein>
<reference key="1">
    <citation type="journal article" date="2007" name="PLoS ONE">
        <title>Genome sequencing shows that European isolates of Francisella tularensis subspecies tularensis are almost identical to US laboratory strain Schu S4.</title>
        <authorList>
            <person name="Chaudhuri R.R."/>
            <person name="Ren C.-P."/>
            <person name="Desmond L."/>
            <person name="Vincent G.A."/>
            <person name="Silman N.J."/>
            <person name="Brehm J.K."/>
            <person name="Elmore M.J."/>
            <person name="Hudson M.J."/>
            <person name="Forsman M."/>
            <person name="Isherwood K.E."/>
            <person name="Gurycova D."/>
            <person name="Minton N.P."/>
            <person name="Titball R.W."/>
            <person name="Pallen M.J."/>
            <person name="Vipond R."/>
        </authorList>
    </citation>
    <scope>NUCLEOTIDE SEQUENCE [LARGE SCALE GENOMIC DNA]</scope>
    <source>
        <strain>FSC 198</strain>
    </source>
</reference>
<feature type="chain" id="PRO_1000001760" description="Phosphate acyltransferase">
    <location>
        <begin position="1"/>
        <end position="348"/>
    </location>
</feature>
<keyword id="KW-0963">Cytoplasm</keyword>
<keyword id="KW-0444">Lipid biosynthesis</keyword>
<keyword id="KW-0443">Lipid metabolism</keyword>
<keyword id="KW-0594">Phospholipid biosynthesis</keyword>
<keyword id="KW-1208">Phospholipid metabolism</keyword>
<keyword id="KW-0808">Transferase</keyword>